<name>Y1180_METJA</name>
<keyword id="KW-0472">Membrane</keyword>
<keyword id="KW-1185">Reference proteome</keyword>
<keyword id="KW-0812">Transmembrane</keyword>
<keyword id="KW-1133">Transmembrane helix</keyword>
<feature type="chain" id="PRO_0000107203" description="Uncharacterized protein MJ1180">
    <location>
        <begin position="1"/>
        <end position="145"/>
    </location>
</feature>
<feature type="transmembrane region" description="Helical" evidence="1">
    <location>
        <begin position="4"/>
        <end position="24"/>
    </location>
</feature>
<proteinExistence type="predicted"/>
<organism>
    <name type="scientific">Methanocaldococcus jannaschii (strain ATCC 43067 / DSM 2661 / JAL-1 / JCM 10045 / NBRC 100440)</name>
    <name type="common">Methanococcus jannaschii</name>
    <dbReference type="NCBI Taxonomy" id="243232"/>
    <lineage>
        <taxon>Archaea</taxon>
        <taxon>Methanobacteriati</taxon>
        <taxon>Methanobacteriota</taxon>
        <taxon>Methanomada group</taxon>
        <taxon>Methanococci</taxon>
        <taxon>Methanococcales</taxon>
        <taxon>Methanocaldococcaceae</taxon>
        <taxon>Methanocaldococcus</taxon>
    </lineage>
</organism>
<dbReference type="EMBL" id="L77117">
    <property type="protein sequence ID" value="AAB99188.1"/>
    <property type="molecule type" value="Genomic_DNA"/>
</dbReference>
<dbReference type="PIR" id="C64447">
    <property type="entry name" value="C64447"/>
</dbReference>
<dbReference type="STRING" id="243232.MJ_1180"/>
<dbReference type="PaxDb" id="243232-MJ_1180"/>
<dbReference type="EnsemblBacteria" id="AAB99188">
    <property type="protein sequence ID" value="AAB99188"/>
    <property type="gene ID" value="MJ_1180"/>
</dbReference>
<dbReference type="KEGG" id="mja:MJ_1180"/>
<dbReference type="eggNOG" id="arCOG01803">
    <property type="taxonomic scope" value="Archaea"/>
</dbReference>
<dbReference type="HOGENOM" id="CLU_1782505_0_0_2"/>
<dbReference type="InParanoid" id="Q58580"/>
<dbReference type="Proteomes" id="UP000000805">
    <property type="component" value="Chromosome"/>
</dbReference>
<dbReference type="GO" id="GO:0016020">
    <property type="term" value="C:membrane"/>
    <property type="evidence" value="ECO:0007669"/>
    <property type="project" value="UniProtKB-SubCell"/>
</dbReference>
<dbReference type="Gene3D" id="3.40.190.10">
    <property type="entry name" value="Periplasmic binding protein-like II"/>
    <property type="match status" value="1"/>
</dbReference>
<dbReference type="SUPFAM" id="SSF53850">
    <property type="entry name" value="Periplasmic binding protein-like II"/>
    <property type="match status" value="1"/>
</dbReference>
<dbReference type="PROSITE" id="PS51257">
    <property type="entry name" value="PROKAR_LIPOPROTEIN"/>
    <property type="match status" value="1"/>
</dbReference>
<comment type="subcellular location">
    <subcellularLocation>
        <location evidence="2">Membrane</location>
        <topology evidence="2">Single-pass membrane protein</topology>
    </subcellularLocation>
</comment>
<protein>
    <recommendedName>
        <fullName>Uncharacterized protein MJ1180</fullName>
    </recommendedName>
</protein>
<reference key="1">
    <citation type="journal article" date="1996" name="Science">
        <title>Complete genome sequence of the methanogenic archaeon, Methanococcus jannaschii.</title>
        <authorList>
            <person name="Bult C.J."/>
            <person name="White O."/>
            <person name="Olsen G.J."/>
            <person name="Zhou L."/>
            <person name="Fleischmann R.D."/>
            <person name="Sutton G.G."/>
            <person name="Blake J.A."/>
            <person name="FitzGerald L.M."/>
            <person name="Clayton R.A."/>
            <person name="Gocayne J.D."/>
            <person name="Kerlavage A.R."/>
            <person name="Dougherty B.A."/>
            <person name="Tomb J.-F."/>
            <person name="Adams M.D."/>
            <person name="Reich C.I."/>
            <person name="Overbeek R."/>
            <person name="Kirkness E.F."/>
            <person name="Weinstock K.G."/>
            <person name="Merrick J.M."/>
            <person name="Glodek A."/>
            <person name="Scott J.L."/>
            <person name="Geoghagen N.S.M."/>
            <person name="Weidman J.F."/>
            <person name="Fuhrmann J.L."/>
            <person name="Nguyen D."/>
            <person name="Utterback T.R."/>
            <person name="Kelley J.M."/>
            <person name="Peterson J.D."/>
            <person name="Sadow P.W."/>
            <person name="Hanna M.C."/>
            <person name="Cotton M.D."/>
            <person name="Roberts K.M."/>
            <person name="Hurst M.A."/>
            <person name="Kaine B.P."/>
            <person name="Borodovsky M."/>
            <person name="Klenk H.-P."/>
            <person name="Fraser C.M."/>
            <person name="Smith H.O."/>
            <person name="Woese C.R."/>
            <person name="Venter J.C."/>
        </authorList>
    </citation>
    <scope>NUCLEOTIDE SEQUENCE [LARGE SCALE GENOMIC DNA]</scope>
    <source>
        <strain>ATCC 43067 / DSM 2661 / JAL-1 / JCM 10045 / NBRC 100440</strain>
    </source>
</reference>
<gene>
    <name type="ordered locus">MJ1180</name>
</gene>
<accession>Q58580</accession>
<evidence type="ECO:0000255" key="1"/>
<evidence type="ECO:0000305" key="2"/>
<sequence>MKKIYMLVALLISSLVLFAGCVQNETSEVPTLTVAYLPTDHHASLFVACDNPDLFKDKYGICLKAVKDKEEYELYKGNKKIANVKVVKVTEGGASIMNLMTQGQVDVALLGYPPVIFYIDKGTKAKVIMNLHTEVLQLLLERIFQ</sequence>